<reference key="1">
    <citation type="journal article" date="2005" name="Science">
        <title>Genome streamlining in a cosmopolitan oceanic bacterium.</title>
        <authorList>
            <person name="Giovannoni S.J."/>
            <person name="Tripp H.J."/>
            <person name="Givan S."/>
            <person name="Podar M."/>
            <person name="Vergin K.L."/>
            <person name="Baptista D."/>
            <person name="Bibbs L."/>
            <person name="Eads J."/>
            <person name="Richardson T.H."/>
            <person name="Noordewier M."/>
            <person name="Rappe M.S."/>
            <person name="Short J.M."/>
            <person name="Carrington J.C."/>
            <person name="Mathur E.J."/>
        </authorList>
    </citation>
    <scope>NUCLEOTIDE SEQUENCE [LARGE SCALE GENOMIC DNA]</scope>
    <source>
        <strain>HTCC1062</strain>
    </source>
</reference>
<name>GCH1_PELUB</name>
<gene>
    <name evidence="2" type="primary">folE</name>
    <name type="ordered locus">SAR11_1245</name>
</gene>
<proteinExistence type="inferred from homology"/>
<protein>
    <recommendedName>
        <fullName evidence="2">GTP cyclohydrolase 1</fullName>
        <ecNumber evidence="2">3.5.4.16</ecNumber>
    </recommendedName>
    <alternativeName>
        <fullName evidence="2">GTP cyclohydrolase I</fullName>
        <shortName evidence="2">GTP-CH-I</shortName>
    </alternativeName>
</protein>
<evidence type="ECO:0000250" key="1"/>
<evidence type="ECO:0000255" key="2">
    <source>
        <dbReference type="HAMAP-Rule" id="MF_00223"/>
    </source>
</evidence>
<feature type="chain" id="PRO_1000058675" description="GTP cyclohydrolase 1">
    <location>
        <begin position="1"/>
        <end position="202"/>
    </location>
</feature>
<feature type="binding site" evidence="2">
    <location>
        <position position="93"/>
    </location>
    <ligand>
        <name>Zn(2+)</name>
        <dbReference type="ChEBI" id="CHEBI:29105"/>
    </ligand>
</feature>
<feature type="binding site" evidence="2">
    <location>
        <position position="96"/>
    </location>
    <ligand>
        <name>Zn(2+)</name>
        <dbReference type="ChEBI" id="CHEBI:29105"/>
    </ligand>
</feature>
<feature type="binding site" evidence="2">
    <location>
        <position position="164"/>
    </location>
    <ligand>
        <name>Zn(2+)</name>
        <dbReference type="ChEBI" id="CHEBI:29105"/>
    </ligand>
</feature>
<dbReference type="EC" id="3.5.4.16" evidence="2"/>
<dbReference type="EMBL" id="CP000084">
    <property type="protein sequence ID" value="AAZ22049.1"/>
    <property type="molecule type" value="Genomic_DNA"/>
</dbReference>
<dbReference type="RefSeq" id="WP_011282248.1">
    <property type="nucleotide sequence ID" value="NC_007205.1"/>
</dbReference>
<dbReference type="SMR" id="Q4FL89"/>
<dbReference type="STRING" id="335992.SAR11_1245"/>
<dbReference type="GeneID" id="66295737"/>
<dbReference type="KEGG" id="pub:SAR11_1245"/>
<dbReference type="eggNOG" id="COG0302">
    <property type="taxonomic scope" value="Bacteria"/>
</dbReference>
<dbReference type="HOGENOM" id="CLU_049768_2_2_5"/>
<dbReference type="OrthoDB" id="9801207at2"/>
<dbReference type="UniPathway" id="UPA00848">
    <property type="reaction ID" value="UER00151"/>
</dbReference>
<dbReference type="Proteomes" id="UP000002528">
    <property type="component" value="Chromosome"/>
</dbReference>
<dbReference type="GO" id="GO:0005737">
    <property type="term" value="C:cytoplasm"/>
    <property type="evidence" value="ECO:0007669"/>
    <property type="project" value="TreeGrafter"/>
</dbReference>
<dbReference type="GO" id="GO:0005525">
    <property type="term" value="F:GTP binding"/>
    <property type="evidence" value="ECO:0007669"/>
    <property type="project" value="UniProtKB-KW"/>
</dbReference>
<dbReference type="GO" id="GO:0003934">
    <property type="term" value="F:GTP cyclohydrolase I activity"/>
    <property type="evidence" value="ECO:0007669"/>
    <property type="project" value="UniProtKB-UniRule"/>
</dbReference>
<dbReference type="GO" id="GO:0008270">
    <property type="term" value="F:zinc ion binding"/>
    <property type="evidence" value="ECO:0007669"/>
    <property type="project" value="UniProtKB-UniRule"/>
</dbReference>
<dbReference type="GO" id="GO:0006730">
    <property type="term" value="P:one-carbon metabolic process"/>
    <property type="evidence" value="ECO:0007669"/>
    <property type="project" value="UniProtKB-UniRule"/>
</dbReference>
<dbReference type="GO" id="GO:0006729">
    <property type="term" value="P:tetrahydrobiopterin biosynthetic process"/>
    <property type="evidence" value="ECO:0007669"/>
    <property type="project" value="TreeGrafter"/>
</dbReference>
<dbReference type="GO" id="GO:0046654">
    <property type="term" value="P:tetrahydrofolate biosynthetic process"/>
    <property type="evidence" value="ECO:0007669"/>
    <property type="project" value="UniProtKB-UniRule"/>
</dbReference>
<dbReference type="FunFam" id="1.10.286.10:FF:000001">
    <property type="entry name" value="GTP cyclohydrolase 1"/>
    <property type="match status" value="1"/>
</dbReference>
<dbReference type="FunFam" id="3.30.1130.10:FF:000001">
    <property type="entry name" value="GTP cyclohydrolase 1"/>
    <property type="match status" value="1"/>
</dbReference>
<dbReference type="Gene3D" id="1.10.286.10">
    <property type="match status" value="1"/>
</dbReference>
<dbReference type="Gene3D" id="3.30.1130.10">
    <property type="match status" value="1"/>
</dbReference>
<dbReference type="HAMAP" id="MF_00223">
    <property type="entry name" value="FolE"/>
    <property type="match status" value="1"/>
</dbReference>
<dbReference type="InterPro" id="IPR043133">
    <property type="entry name" value="GTP-CH-I_C/QueF"/>
</dbReference>
<dbReference type="InterPro" id="IPR043134">
    <property type="entry name" value="GTP-CH-I_N"/>
</dbReference>
<dbReference type="InterPro" id="IPR001474">
    <property type="entry name" value="GTP_CycHdrlase_I"/>
</dbReference>
<dbReference type="InterPro" id="IPR018234">
    <property type="entry name" value="GTP_CycHdrlase_I_CS"/>
</dbReference>
<dbReference type="InterPro" id="IPR020602">
    <property type="entry name" value="GTP_CycHdrlase_I_dom"/>
</dbReference>
<dbReference type="NCBIfam" id="TIGR00063">
    <property type="entry name" value="folE"/>
    <property type="match status" value="1"/>
</dbReference>
<dbReference type="NCBIfam" id="NF006825">
    <property type="entry name" value="PRK09347.1-2"/>
    <property type="match status" value="1"/>
</dbReference>
<dbReference type="NCBIfam" id="NF006826">
    <property type="entry name" value="PRK09347.1-3"/>
    <property type="match status" value="1"/>
</dbReference>
<dbReference type="PANTHER" id="PTHR11109:SF7">
    <property type="entry name" value="GTP CYCLOHYDROLASE 1"/>
    <property type="match status" value="1"/>
</dbReference>
<dbReference type="PANTHER" id="PTHR11109">
    <property type="entry name" value="GTP CYCLOHYDROLASE I"/>
    <property type="match status" value="1"/>
</dbReference>
<dbReference type="Pfam" id="PF01227">
    <property type="entry name" value="GTP_cyclohydroI"/>
    <property type="match status" value="1"/>
</dbReference>
<dbReference type="SUPFAM" id="SSF55620">
    <property type="entry name" value="Tetrahydrobiopterin biosynthesis enzymes-like"/>
    <property type="match status" value="1"/>
</dbReference>
<dbReference type="PROSITE" id="PS00859">
    <property type="entry name" value="GTP_CYCLOHYDROL_1_1"/>
    <property type="match status" value="1"/>
</dbReference>
<dbReference type="PROSITE" id="PS00860">
    <property type="entry name" value="GTP_CYCLOHYDROL_1_2"/>
    <property type="match status" value="1"/>
</dbReference>
<organism>
    <name type="scientific">Pelagibacter ubique (strain HTCC1062)</name>
    <dbReference type="NCBI Taxonomy" id="335992"/>
    <lineage>
        <taxon>Bacteria</taxon>
        <taxon>Pseudomonadati</taxon>
        <taxon>Pseudomonadota</taxon>
        <taxon>Alphaproteobacteria</taxon>
        <taxon>Candidatus Pelagibacterales</taxon>
        <taxon>Candidatus Pelagibacteraceae</taxon>
        <taxon>Candidatus Pelagibacter</taxon>
    </lineage>
</organism>
<sequence>MKLVEDTDSKILDTKKVSDKEAEEAFKTILTWMGEDPSREGLLETPKRVVKAFKEYFGGYTEDAEKILEKTFGDVEGYDDMVVEKNISVSSHCEHHMAPIVGTAHVAYIPNERVVGLSKLARVVEVFSKRLQTQERLTMQVAQALMTSLDAKGVAVTIDAAHQCMTMRGIKKENATTVTNYFLGEFKKDLSVQNRYLRFISK</sequence>
<accession>Q4FL89</accession>
<keyword id="KW-0342">GTP-binding</keyword>
<keyword id="KW-0378">Hydrolase</keyword>
<keyword id="KW-0479">Metal-binding</keyword>
<keyword id="KW-0547">Nucleotide-binding</keyword>
<keyword id="KW-0554">One-carbon metabolism</keyword>
<keyword id="KW-1185">Reference proteome</keyword>
<keyword id="KW-0862">Zinc</keyword>
<comment type="catalytic activity">
    <reaction evidence="2">
        <text>GTP + H2O = 7,8-dihydroneopterin 3'-triphosphate + formate + H(+)</text>
        <dbReference type="Rhea" id="RHEA:17473"/>
        <dbReference type="ChEBI" id="CHEBI:15377"/>
        <dbReference type="ChEBI" id="CHEBI:15378"/>
        <dbReference type="ChEBI" id="CHEBI:15740"/>
        <dbReference type="ChEBI" id="CHEBI:37565"/>
        <dbReference type="ChEBI" id="CHEBI:58462"/>
        <dbReference type="EC" id="3.5.4.16"/>
    </reaction>
</comment>
<comment type="pathway">
    <text evidence="2">Cofactor biosynthesis; 7,8-dihydroneopterin triphosphate biosynthesis; 7,8-dihydroneopterin triphosphate from GTP: step 1/1.</text>
</comment>
<comment type="subunit">
    <text evidence="1">Toroid-shaped homodecamer, composed of two pentamers of five dimers.</text>
</comment>
<comment type="similarity">
    <text evidence="2">Belongs to the GTP cyclohydrolase I family.</text>
</comment>